<comment type="function">
    <text evidence="2">ATP-dependent protein-folding chaperone for the eIF2 complex. Binds to the gamma subunit of the eIF2 complex which allows the subunit to assemble with the alpha and beta subunits.</text>
</comment>
<comment type="subcellular location">
    <subcellularLocation>
        <location evidence="2">Cytoplasm</location>
    </subcellularLocation>
</comment>
<comment type="similarity">
    <text evidence="5">Belongs to the CDC123 family.</text>
</comment>
<accession>A2R4R1</accession>
<gene>
    <name type="primary">cdc123</name>
    <name type="ORF">An15g01290</name>
</gene>
<name>CD123_ASPNC</name>
<evidence type="ECO:0000250" key="1">
    <source>
        <dbReference type="UniProtKB" id="O75794"/>
    </source>
</evidence>
<evidence type="ECO:0000250" key="2">
    <source>
        <dbReference type="UniProtKB" id="Q05791"/>
    </source>
</evidence>
<evidence type="ECO:0000250" key="3">
    <source>
        <dbReference type="UniProtKB" id="Q9P7N5"/>
    </source>
</evidence>
<evidence type="ECO:0000256" key="4">
    <source>
        <dbReference type="SAM" id="MobiDB-lite"/>
    </source>
</evidence>
<evidence type="ECO:0000305" key="5"/>
<proteinExistence type="inferred from homology"/>
<organism>
    <name type="scientific">Aspergillus niger (strain ATCC MYA-4892 / CBS 513.88 / FGSC A1513)</name>
    <dbReference type="NCBI Taxonomy" id="425011"/>
    <lineage>
        <taxon>Eukaryota</taxon>
        <taxon>Fungi</taxon>
        <taxon>Dikarya</taxon>
        <taxon>Ascomycota</taxon>
        <taxon>Pezizomycotina</taxon>
        <taxon>Eurotiomycetes</taxon>
        <taxon>Eurotiomycetidae</taxon>
        <taxon>Eurotiales</taxon>
        <taxon>Aspergillaceae</taxon>
        <taxon>Aspergillus</taxon>
        <taxon>Aspergillus subgen. Circumdati</taxon>
    </lineage>
</organism>
<reference key="1">
    <citation type="journal article" date="2007" name="Nat. Biotechnol.">
        <title>Genome sequencing and analysis of the versatile cell factory Aspergillus niger CBS 513.88.</title>
        <authorList>
            <person name="Pel H.J."/>
            <person name="de Winde J.H."/>
            <person name="Archer D.B."/>
            <person name="Dyer P.S."/>
            <person name="Hofmann G."/>
            <person name="Schaap P.J."/>
            <person name="Turner G."/>
            <person name="de Vries R.P."/>
            <person name="Albang R."/>
            <person name="Albermann K."/>
            <person name="Andersen M.R."/>
            <person name="Bendtsen J.D."/>
            <person name="Benen J.A.E."/>
            <person name="van den Berg M."/>
            <person name="Breestraat S."/>
            <person name="Caddick M.X."/>
            <person name="Contreras R."/>
            <person name="Cornell M."/>
            <person name="Coutinho P.M."/>
            <person name="Danchin E.G.J."/>
            <person name="Debets A.J.M."/>
            <person name="Dekker P."/>
            <person name="van Dijck P.W.M."/>
            <person name="van Dijk A."/>
            <person name="Dijkhuizen L."/>
            <person name="Driessen A.J.M."/>
            <person name="d'Enfert C."/>
            <person name="Geysens S."/>
            <person name="Goosen C."/>
            <person name="Groot G.S.P."/>
            <person name="de Groot P.W.J."/>
            <person name="Guillemette T."/>
            <person name="Henrissat B."/>
            <person name="Herweijer M."/>
            <person name="van den Hombergh J.P.T.W."/>
            <person name="van den Hondel C.A.M.J.J."/>
            <person name="van der Heijden R.T.J.M."/>
            <person name="van der Kaaij R.M."/>
            <person name="Klis F.M."/>
            <person name="Kools H.J."/>
            <person name="Kubicek C.P."/>
            <person name="van Kuyk P.A."/>
            <person name="Lauber J."/>
            <person name="Lu X."/>
            <person name="van der Maarel M.J.E.C."/>
            <person name="Meulenberg R."/>
            <person name="Menke H."/>
            <person name="Mortimer M.A."/>
            <person name="Nielsen J."/>
            <person name="Oliver S.G."/>
            <person name="Olsthoorn M."/>
            <person name="Pal K."/>
            <person name="van Peij N.N.M.E."/>
            <person name="Ram A.F.J."/>
            <person name="Rinas U."/>
            <person name="Roubos J.A."/>
            <person name="Sagt C.M.J."/>
            <person name="Schmoll M."/>
            <person name="Sun J."/>
            <person name="Ussery D."/>
            <person name="Varga J."/>
            <person name="Vervecken W."/>
            <person name="van de Vondervoort P.J.J."/>
            <person name="Wedler H."/>
            <person name="Woesten H.A.B."/>
            <person name="Zeng A.-P."/>
            <person name="van Ooyen A.J.J."/>
            <person name="Visser J."/>
            <person name="Stam H."/>
        </authorList>
    </citation>
    <scope>NUCLEOTIDE SEQUENCE [LARGE SCALE GENOMIC DNA]</scope>
    <source>
        <strain>ATCC MYA-4892 / CBS 513.88 / FGSC A1513</strain>
    </source>
</reference>
<sequence>MPHIDSEAPAPAAEAPTEQLTRLPFPPVTYSHILHCSYHHWQPRYRTLVPKSRAIRLTAPFVKYLRADGIVLPPEAAPPTDDDNLDTFSDDGADEEPDPSVEWPEIHNQIKSTITEYGGKVTPKLNWSAPKDATWMSATNDTQCRTANDIYLLLKSSDFISHDLEHPFDDCVSDTTTTDDSSSTPPEIPYYLVLRKYVNFNPSLEFRCFVRNRVLLCMCQRDQNHFDFLFPMRDSLRSRIQTFFDEKLKDTFTDPNFVFDVYIPPPHDRVWLIDINPWAERTDSLLFSWMEILHMKDPVDDAPLFPEFRLIKRDDPEAYAFTTPQYSAHKLPKEVVDASISGPGGMSEFLGKWQDILAKQAQESDSDNEDQ</sequence>
<protein>
    <recommendedName>
        <fullName evidence="5">Translation initiation factor eIF2 assembly protein</fullName>
    </recommendedName>
    <alternativeName>
        <fullName>Cell division cycle protein 123</fullName>
    </alternativeName>
</protein>
<feature type="chain" id="PRO_0000350937" description="Translation initiation factor eIF2 assembly protein">
    <location>
        <begin position="1"/>
        <end position="371"/>
    </location>
</feature>
<feature type="region of interest" description="Disordered" evidence="4">
    <location>
        <begin position="73"/>
        <end position="101"/>
    </location>
</feature>
<feature type="compositionally biased region" description="Acidic residues" evidence="4">
    <location>
        <begin position="80"/>
        <end position="99"/>
    </location>
</feature>
<feature type="binding site" evidence="1">
    <location>
        <position position="124"/>
    </location>
    <ligand>
        <name>ATP</name>
        <dbReference type="ChEBI" id="CHEBI:30616"/>
    </ligand>
</feature>
<feature type="binding site" evidence="1">
    <location>
        <position position="127"/>
    </location>
    <ligand>
        <name>ATP</name>
        <dbReference type="ChEBI" id="CHEBI:30616"/>
    </ligand>
</feature>
<feature type="binding site" evidence="1">
    <location>
        <position position="129"/>
    </location>
    <ligand>
        <name>ATP</name>
        <dbReference type="ChEBI" id="CHEBI:30616"/>
    </ligand>
</feature>
<feature type="binding site" evidence="3">
    <location>
        <position position="131"/>
    </location>
    <ligand>
        <name>ATP</name>
        <dbReference type="ChEBI" id="CHEBI:30616"/>
    </ligand>
</feature>
<feature type="binding site" evidence="3">
    <location>
        <position position="195"/>
    </location>
    <ligand>
        <name>ATP</name>
        <dbReference type="ChEBI" id="CHEBI:30616"/>
    </ligand>
</feature>
<feature type="binding site" evidence="1">
    <location>
        <position position="196"/>
    </location>
    <ligand>
        <name>ATP</name>
        <dbReference type="ChEBI" id="CHEBI:30616"/>
    </ligand>
</feature>
<feature type="binding site" evidence="1">
    <location>
        <position position="205"/>
    </location>
    <ligand>
        <name>ATP</name>
        <dbReference type="ChEBI" id="CHEBI:30616"/>
    </ligand>
</feature>
<feature type="binding site" evidence="1">
    <location>
        <position position="207"/>
    </location>
    <ligand>
        <name>ATP</name>
        <dbReference type="ChEBI" id="CHEBI:30616"/>
    </ligand>
</feature>
<feature type="binding site" evidence="1">
    <location>
        <position position="221"/>
    </location>
    <ligand>
        <name>ATP</name>
        <dbReference type="ChEBI" id="CHEBI:30616"/>
    </ligand>
</feature>
<feature type="binding site" evidence="3">
    <location>
        <position position="260"/>
    </location>
    <ligand>
        <name>ATP</name>
        <dbReference type="ChEBI" id="CHEBI:30616"/>
    </ligand>
</feature>
<feature type="binding site" evidence="1">
    <location>
        <position position="274"/>
    </location>
    <ligand>
        <name>ATP</name>
        <dbReference type="ChEBI" id="CHEBI:30616"/>
    </ligand>
</feature>
<feature type="binding site" evidence="1">
    <location>
        <position position="274"/>
    </location>
    <ligand>
        <name>Mg(2+)</name>
        <dbReference type="ChEBI" id="CHEBI:18420"/>
    </ligand>
</feature>
<feature type="binding site" evidence="1">
    <location>
        <position position="276"/>
    </location>
    <ligand>
        <name>ATP</name>
        <dbReference type="ChEBI" id="CHEBI:30616"/>
    </ligand>
</feature>
<feature type="binding site" evidence="1">
    <location>
        <position position="276"/>
    </location>
    <ligand>
        <name>Mg(2+)</name>
        <dbReference type="ChEBI" id="CHEBI:18420"/>
    </ligand>
</feature>
<dbReference type="EMBL" id="AM270336">
    <property type="protein sequence ID" value="CAL00943.1"/>
    <property type="molecule type" value="Genomic_DNA"/>
</dbReference>
<dbReference type="SMR" id="A2R4R1"/>
<dbReference type="EnsemblFungi" id="CAL00943">
    <property type="protein sequence ID" value="CAL00943"/>
    <property type="gene ID" value="An15g01290"/>
</dbReference>
<dbReference type="VEuPathDB" id="FungiDB:An15g01290"/>
<dbReference type="HOGENOM" id="CLU_034402_2_0_1"/>
<dbReference type="Proteomes" id="UP000006706">
    <property type="component" value="Chromosome 3R"/>
</dbReference>
<dbReference type="GO" id="GO:0005737">
    <property type="term" value="C:cytoplasm"/>
    <property type="evidence" value="ECO:0000250"/>
    <property type="project" value="UniProtKB"/>
</dbReference>
<dbReference type="GO" id="GO:0005524">
    <property type="term" value="F:ATP binding"/>
    <property type="evidence" value="ECO:0000250"/>
    <property type="project" value="UniProtKB"/>
</dbReference>
<dbReference type="GO" id="GO:0000287">
    <property type="term" value="F:magnesium ion binding"/>
    <property type="evidence" value="ECO:0000250"/>
    <property type="project" value="UniProtKB"/>
</dbReference>
<dbReference type="GO" id="GO:0044183">
    <property type="term" value="F:protein folding chaperone"/>
    <property type="evidence" value="ECO:0000250"/>
    <property type="project" value="UniProtKB"/>
</dbReference>
<dbReference type="GO" id="GO:1905143">
    <property type="term" value="P:eukaryotic translation initiation factor 2 complex assembly"/>
    <property type="evidence" value="ECO:0000250"/>
    <property type="project" value="UniProtKB"/>
</dbReference>
<dbReference type="InterPro" id="IPR009772">
    <property type="entry name" value="CDC123"/>
</dbReference>
<dbReference type="PANTHER" id="PTHR15323:SF6">
    <property type="entry name" value="CELL DIVISION CYCLE PROTEIN 123 HOMOLOG"/>
    <property type="match status" value="1"/>
</dbReference>
<dbReference type="PANTHER" id="PTHR15323">
    <property type="entry name" value="D123 PROTEIN"/>
    <property type="match status" value="1"/>
</dbReference>
<dbReference type="Pfam" id="PF07065">
    <property type="entry name" value="D123"/>
    <property type="match status" value="1"/>
</dbReference>
<keyword id="KW-0067">ATP-binding</keyword>
<keyword id="KW-0143">Chaperone</keyword>
<keyword id="KW-0963">Cytoplasm</keyword>
<keyword id="KW-0460">Magnesium</keyword>
<keyword id="KW-0479">Metal-binding</keyword>
<keyword id="KW-0547">Nucleotide-binding</keyword>
<keyword id="KW-1185">Reference proteome</keyword>